<evidence type="ECO:0000255" key="1">
    <source>
        <dbReference type="HAMAP-Rule" id="MF_00091"/>
    </source>
</evidence>
<feature type="chain" id="PRO_1000075461" description="S-ribosylhomocysteine lyase">
    <location>
        <begin position="1"/>
        <end position="169"/>
    </location>
</feature>
<feature type="binding site" evidence="1">
    <location>
        <position position="54"/>
    </location>
    <ligand>
        <name>Fe cation</name>
        <dbReference type="ChEBI" id="CHEBI:24875"/>
    </ligand>
</feature>
<feature type="binding site" evidence="1">
    <location>
        <position position="58"/>
    </location>
    <ligand>
        <name>Fe cation</name>
        <dbReference type="ChEBI" id="CHEBI:24875"/>
    </ligand>
</feature>
<feature type="binding site" evidence="1">
    <location>
        <position position="128"/>
    </location>
    <ligand>
        <name>Fe cation</name>
        <dbReference type="ChEBI" id="CHEBI:24875"/>
    </ligand>
</feature>
<gene>
    <name evidence="1" type="primary">luxS</name>
    <name type="ordered locus">Ssed_3432</name>
</gene>
<reference key="1">
    <citation type="submission" date="2007-08" db="EMBL/GenBank/DDBJ databases">
        <title>Complete sequence of Shewanella sediminis HAW-EB3.</title>
        <authorList>
            <consortium name="US DOE Joint Genome Institute"/>
            <person name="Copeland A."/>
            <person name="Lucas S."/>
            <person name="Lapidus A."/>
            <person name="Barry K."/>
            <person name="Glavina del Rio T."/>
            <person name="Dalin E."/>
            <person name="Tice H."/>
            <person name="Pitluck S."/>
            <person name="Chertkov O."/>
            <person name="Brettin T."/>
            <person name="Bruce D."/>
            <person name="Detter J.C."/>
            <person name="Han C."/>
            <person name="Schmutz J."/>
            <person name="Larimer F."/>
            <person name="Land M."/>
            <person name="Hauser L."/>
            <person name="Kyrpides N."/>
            <person name="Kim E."/>
            <person name="Zhao J.-S."/>
            <person name="Richardson P."/>
        </authorList>
    </citation>
    <scope>NUCLEOTIDE SEQUENCE [LARGE SCALE GENOMIC DNA]</scope>
    <source>
        <strain>HAW-EB3</strain>
    </source>
</reference>
<organism>
    <name type="scientific">Shewanella sediminis (strain HAW-EB3)</name>
    <dbReference type="NCBI Taxonomy" id="425104"/>
    <lineage>
        <taxon>Bacteria</taxon>
        <taxon>Pseudomonadati</taxon>
        <taxon>Pseudomonadota</taxon>
        <taxon>Gammaproteobacteria</taxon>
        <taxon>Alteromonadales</taxon>
        <taxon>Shewanellaceae</taxon>
        <taxon>Shewanella</taxon>
    </lineage>
</organism>
<sequence>MPLLDSFTVDHTRMQAPAVRIAKTMKTPKGDVITVFDLRFCVPNKEILSERGIHTLEHLYAGFMRDHLNGDSVEIIDISPMGCRTGFYMSLIGTPAEADVAQAWLASMNDVLKVAEQAQIPELNEYQCGTFDMHSLDQAQSIARSIIAAGITVNKNDELKLSDEILNGL</sequence>
<protein>
    <recommendedName>
        <fullName evidence="1">S-ribosylhomocysteine lyase</fullName>
        <ecNumber evidence="1">4.4.1.21</ecNumber>
    </recommendedName>
    <alternativeName>
        <fullName evidence="1">AI-2 synthesis protein</fullName>
    </alternativeName>
    <alternativeName>
        <fullName evidence="1">Autoinducer-2 production protein LuxS</fullName>
    </alternativeName>
</protein>
<accession>A8FYW3</accession>
<comment type="function">
    <text evidence="1">Involved in the synthesis of autoinducer 2 (AI-2) which is secreted by bacteria and is used to communicate both the cell density and the metabolic potential of the environment. The regulation of gene expression in response to changes in cell density is called quorum sensing. Catalyzes the transformation of S-ribosylhomocysteine (RHC) to homocysteine (HC) and 4,5-dihydroxy-2,3-pentadione (DPD).</text>
</comment>
<comment type="catalytic activity">
    <reaction evidence="1">
        <text>S-(5-deoxy-D-ribos-5-yl)-L-homocysteine = (S)-4,5-dihydroxypentane-2,3-dione + L-homocysteine</text>
        <dbReference type="Rhea" id="RHEA:17753"/>
        <dbReference type="ChEBI" id="CHEBI:29484"/>
        <dbReference type="ChEBI" id="CHEBI:58195"/>
        <dbReference type="ChEBI" id="CHEBI:58199"/>
        <dbReference type="EC" id="4.4.1.21"/>
    </reaction>
</comment>
<comment type="cofactor">
    <cofactor evidence="1">
        <name>Fe cation</name>
        <dbReference type="ChEBI" id="CHEBI:24875"/>
    </cofactor>
    <text evidence="1">Binds 1 Fe cation per subunit.</text>
</comment>
<comment type="subunit">
    <text evidence="1">Homodimer.</text>
</comment>
<comment type="similarity">
    <text evidence="1">Belongs to the LuxS family.</text>
</comment>
<name>LUXS_SHESH</name>
<proteinExistence type="inferred from homology"/>
<keyword id="KW-0071">Autoinducer synthesis</keyword>
<keyword id="KW-0408">Iron</keyword>
<keyword id="KW-0456">Lyase</keyword>
<keyword id="KW-0479">Metal-binding</keyword>
<keyword id="KW-0673">Quorum sensing</keyword>
<keyword id="KW-1185">Reference proteome</keyword>
<dbReference type="EC" id="4.4.1.21" evidence="1"/>
<dbReference type="EMBL" id="CP000821">
    <property type="protein sequence ID" value="ABV38036.1"/>
    <property type="molecule type" value="Genomic_DNA"/>
</dbReference>
<dbReference type="RefSeq" id="WP_012143766.1">
    <property type="nucleotide sequence ID" value="NC_009831.1"/>
</dbReference>
<dbReference type="SMR" id="A8FYW3"/>
<dbReference type="STRING" id="425104.Ssed_3432"/>
<dbReference type="KEGG" id="sse:Ssed_3432"/>
<dbReference type="eggNOG" id="COG1854">
    <property type="taxonomic scope" value="Bacteria"/>
</dbReference>
<dbReference type="HOGENOM" id="CLU_107531_2_0_6"/>
<dbReference type="OrthoDB" id="9788129at2"/>
<dbReference type="Proteomes" id="UP000002015">
    <property type="component" value="Chromosome"/>
</dbReference>
<dbReference type="GO" id="GO:0005506">
    <property type="term" value="F:iron ion binding"/>
    <property type="evidence" value="ECO:0007669"/>
    <property type="project" value="InterPro"/>
</dbReference>
<dbReference type="GO" id="GO:0043768">
    <property type="term" value="F:S-ribosylhomocysteine lyase activity"/>
    <property type="evidence" value="ECO:0007669"/>
    <property type="project" value="UniProtKB-UniRule"/>
</dbReference>
<dbReference type="GO" id="GO:0009372">
    <property type="term" value="P:quorum sensing"/>
    <property type="evidence" value="ECO:0007669"/>
    <property type="project" value="UniProtKB-UniRule"/>
</dbReference>
<dbReference type="FunFam" id="3.30.1360.80:FF:000001">
    <property type="entry name" value="S-ribosylhomocysteine lyase"/>
    <property type="match status" value="1"/>
</dbReference>
<dbReference type="Gene3D" id="3.30.1360.80">
    <property type="entry name" value="S-ribosylhomocysteinase (LuxS)"/>
    <property type="match status" value="1"/>
</dbReference>
<dbReference type="HAMAP" id="MF_00091">
    <property type="entry name" value="LuxS"/>
    <property type="match status" value="1"/>
</dbReference>
<dbReference type="InterPro" id="IPR037005">
    <property type="entry name" value="LuxS_sf"/>
</dbReference>
<dbReference type="InterPro" id="IPR011249">
    <property type="entry name" value="Metalloenz_LuxS/M16"/>
</dbReference>
<dbReference type="InterPro" id="IPR003815">
    <property type="entry name" value="S-ribosylhomocysteinase"/>
</dbReference>
<dbReference type="NCBIfam" id="NF002602">
    <property type="entry name" value="PRK02260.1-2"/>
    <property type="match status" value="1"/>
</dbReference>
<dbReference type="PANTHER" id="PTHR35799">
    <property type="entry name" value="S-RIBOSYLHOMOCYSTEINE LYASE"/>
    <property type="match status" value="1"/>
</dbReference>
<dbReference type="PANTHER" id="PTHR35799:SF1">
    <property type="entry name" value="S-RIBOSYLHOMOCYSTEINE LYASE"/>
    <property type="match status" value="1"/>
</dbReference>
<dbReference type="Pfam" id="PF02664">
    <property type="entry name" value="LuxS"/>
    <property type="match status" value="1"/>
</dbReference>
<dbReference type="PIRSF" id="PIRSF006160">
    <property type="entry name" value="AI2"/>
    <property type="match status" value="1"/>
</dbReference>
<dbReference type="PRINTS" id="PR01487">
    <property type="entry name" value="LUXSPROTEIN"/>
</dbReference>
<dbReference type="SUPFAM" id="SSF63411">
    <property type="entry name" value="LuxS/MPP-like metallohydrolase"/>
    <property type="match status" value="1"/>
</dbReference>